<name>PCDA6_HUMAN</name>
<feature type="signal peptide" evidence="2">
    <location>
        <begin position="1"/>
        <end position="29"/>
    </location>
</feature>
<feature type="chain" id="PRO_0000003894" description="Protocadherin alpha-6">
    <location>
        <begin position="30"/>
        <end position="950"/>
    </location>
</feature>
<feature type="topological domain" description="Extracellular" evidence="2">
    <location>
        <begin position="30"/>
        <end position="697"/>
    </location>
</feature>
<feature type="transmembrane region" description="Helical" evidence="2">
    <location>
        <begin position="698"/>
        <end position="718"/>
    </location>
</feature>
<feature type="topological domain" description="Cytoplasmic" evidence="2">
    <location>
        <begin position="719"/>
        <end position="950"/>
    </location>
</feature>
<feature type="domain" description="Cadherin 1" evidence="3">
    <location>
        <begin position="34"/>
        <end position="133"/>
    </location>
</feature>
<feature type="domain" description="Cadherin 2" evidence="3">
    <location>
        <begin position="157"/>
        <end position="242"/>
    </location>
</feature>
<feature type="domain" description="Cadherin 3" evidence="3">
    <location>
        <begin position="243"/>
        <end position="350"/>
    </location>
</feature>
<feature type="domain" description="Cadherin 4" evidence="3">
    <location>
        <begin position="351"/>
        <end position="455"/>
    </location>
</feature>
<feature type="domain" description="Cadherin 5" evidence="3">
    <location>
        <begin position="456"/>
        <end position="565"/>
    </location>
</feature>
<feature type="domain" description="Cadherin 6" evidence="3">
    <location>
        <begin position="581"/>
        <end position="678"/>
    </location>
</feature>
<feature type="repeat" description="PXXP 1">
    <location>
        <begin position="799"/>
        <end position="802"/>
    </location>
</feature>
<feature type="repeat" description="PXXP 2">
    <location>
        <begin position="832"/>
        <end position="835"/>
    </location>
</feature>
<feature type="repeat" description="PXXP 3">
    <location>
        <begin position="873"/>
        <end position="876"/>
    </location>
</feature>
<feature type="repeat" description="PXXP 4">
    <location>
        <begin position="891"/>
        <end position="894"/>
    </location>
</feature>
<feature type="region of interest" description="4 X 4 AA repeats of P-X-X-P">
    <location>
        <begin position="799"/>
        <end position="894"/>
    </location>
</feature>
<feature type="region of interest" description="Disordered" evidence="4">
    <location>
        <begin position="830"/>
        <end position="950"/>
    </location>
</feature>
<feature type="compositionally biased region" description="Basic and acidic residues" evidence="4">
    <location>
        <begin position="909"/>
        <end position="923"/>
    </location>
</feature>
<feature type="glycosylation site" description="N-linked (GlcNAc...) asparagine" evidence="2">
    <location>
        <position position="257"/>
    </location>
</feature>
<feature type="glycosylation site" description="N-linked (GlcNAc...) asparagine" evidence="2">
    <location>
        <position position="265"/>
    </location>
</feature>
<feature type="glycosylation site" description="N-linked (GlcNAc...) asparagine" evidence="2">
    <location>
        <position position="386"/>
    </location>
</feature>
<feature type="glycosylation site" description="N-linked (GlcNAc...) asparagine" evidence="2">
    <location>
        <position position="548"/>
    </location>
</feature>
<feature type="splice variant" id="VSP_000681" description="In isoform 2." evidence="6">
    <location>
        <begin position="535"/>
        <end position="798"/>
    </location>
</feature>
<feature type="splice variant" id="VSP_000682" description="In isoform 3." evidence="5">
    <original>PRQPN</original>
    <variation>VSEFS</variation>
    <location>
        <begin position="799"/>
        <end position="803"/>
    </location>
</feature>
<feature type="splice variant" id="VSP_000683" description="In isoform 3." evidence="5">
    <location>
        <begin position="804"/>
        <end position="950"/>
    </location>
</feature>
<feature type="sequence variant" id="VAR_061061" description="In dbSNP:rs60309716.">
    <original>L</original>
    <variation>V</variation>
    <location>
        <position position="585"/>
    </location>
</feature>
<dbReference type="EMBL" id="AF152314">
    <property type="protein sequence ID" value="AAD43708.1"/>
    <property type="molecule type" value="mRNA"/>
</dbReference>
<dbReference type="EMBL" id="AF152484">
    <property type="protein sequence ID" value="AAD43745.1"/>
    <property type="molecule type" value="mRNA"/>
</dbReference>
<dbReference type="EMBL" id="AF169694">
    <property type="protein sequence ID" value="AAF89691.1"/>
    <property type="status" value="ALT_INIT"/>
    <property type="molecule type" value="mRNA"/>
</dbReference>
<dbReference type="EMBL" id="AC005609">
    <property type="protein sequence ID" value="AAC34320.1"/>
    <property type="molecule type" value="Genomic_DNA"/>
</dbReference>
<dbReference type="EMBL" id="BC036674">
    <property type="protein sequence ID" value="AAH36674.1"/>
    <property type="molecule type" value="mRNA"/>
</dbReference>
<dbReference type="CCDS" id="CCDS47281.1">
    <molecule id="Q9UN73-1"/>
</dbReference>
<dbReference type="CCDS" id="CCDS47282.1">
    <molecule id="Q9UN73-2"/>
</dbReference>
<dbReference type="RefSeq" id="NP_061732.1">
    <molecule id="Q9UN73-1"/>
    <property type="nucleotide sequence ID" value="NM_018909.4"/>
</dbReference>
<dbReference type="RefSeq" id="NP_114036.1">
    <molecule id="Q9UN73-3"/>
    <property type="nucleotide sequence ID" value="NM_031848.3"/>
</dbReference>
<dbReference type="RefSeq" id="NP_114037.1">
    <molecule id="Q9UN73-2"/>
    <property type="nucleotide sequence ID" value="NM_031849.3"/>
</dbReference>
<dbReference type="SMR" id="Q9UN73"/>
<dbReference type="BioGRID" id="121082">
    <property type="interactions" value="7"/>
</dbReference>
<dbReference type="FunCoup" id="Q9UN73">
    <property type="interactions" value="43"/>
</dbReference>
<dbReference type="IntAct" id="Q9UN73">
    <property type="interactions" value="7"/>
</dbReference>
<dbReference type="STRING" id="9606.ENSP00000433378"/>
<dbReference type="GlyCosmos" id="Q9UN73">
    <property type="glycosylation" value="4 sites, No reported glycans"/>
</dbReference>
<dbReference type="GlyGen" id="Q9UN73">
    <property type="glycosylation" value="4 sites"/>
</dbReference>
<dbReference type="iPTMnet" id="Q9UN73"/>
<dbReference type="PhosphoSitePlus" id="Q9UN73"/>
<dbReference type="BioMuta" id="PCDHA6"/>
<dbReference type="DMDM" id="13878423"/>
<dbReference type="jPOST" id="Q9UN73"/>
<dbReference type="MassIVE" id="Q9UN73"/>
<dbReference type="PaxDb" id="9606-ENSP00000433378"/>
<dbReference type="PeptideAtlas" id="Q9UN73"/>
<dbReference type="ProteomicsDB" id="85261">
    <molecule id="Q9UN73-1"/>
</dbReference>
<dbReference type="ProteomicsDB" id="85262">
    <molecule id="Q9UN73-2"/>
</dbReference>
<dbReference type="ProteomicsDB" id="85263">
    <molecule id="Q9UN73-3"/>
</dbReference>
<dbReference type="Antibodypedia" id="2260">
    <property type="antibodies" value="228 antibodies from 27 providers"/>
</dbReference>
<dbReference type="DNASU" id="56142"/>
<dbReference type="Ensembl" id="ENST00000378126.4">
    <molecule id="Q9UN73-3"/>
    <property type="protein sequence ID" value="ENSP00000367366.4"/>
    <property type="gene ID" value="ENSG00000081842.18"/>
</dbReference>
<dbReference type="Ensembl" id="ENST00000527624.1">
    <molecule id="Q9UN73-2"/>
    <property type="protein sequence ID" value="ENSP00000434113.1"/>
    <property type="gene ID" value="ENSG00000081842.18"/>
</dbReference>
<dbReference type="Ensembl" id="ENST00000529310.6">
    <molecule id="Q9UN73-1"/>
    <property type="protein sequence ID" value="ENSP00000433378.1"/>
    <property type="gene ID" value="ENSG00000081842.18"/>
</dbReference>
<dbReference type="Ensembl" id="ENST00000708301.1">
    <molecule id="Q9UN73-3"/>
    <property type="protein sequence ID" value="ENSP00000517152.1"/>
    <property type="gene ID" value="ENSG00000291654.1"/>
</dbReference>
<dbReference type="Ensembl" id="ENST00000708302.1">
    <molecule id="Q9UN73-1"/>
    <property type="protein sequence ID" value="ENSP00000517153.1"/>
    <property type="gene ID" value="ENSG00000291654.1"/>
</dbReference>
<dbReference type="Ensembl" id="ENST00000708303.1">
    <molecule id="Q9UN73-2"/>
    <property type="protein sequence ID" value="ENSP00000517154.1"/>
    <property type="gene ID" value="ENSG00000291654.1"/>
</dbReference>
<dbReference type="GeneID" id="56142"/>
<dbReference type="KEGG" id="hsa:56142"/>
<dbReference type="MANE-Select" id="ENST00000529310.6">
    <property type="protein sequence ID" value="ENSP00000433378.1"/>
    <property type="RefSeq nucleotide sequence ID" value="NM_018909.4"/>
    <property type="RefSeq protein sequence ID" value="NP_061732.1"/>
</dbReference>
<dbReference type="UCSC" id="uc003lhn.4">
    <molecule id="Q9UN73-1"/>
    <property type="organism name" value="human"/>
</dbReference>
<dbReference type="AGR" id="HGNC:8672"/>
<dbReference type="CTD" id="56142"/>
<dbReference type="DisGeNET" id="56142"/>
<dbReference type="GeneCards" id="PCDHA6"/>
<dbReference type="HGNC" id="HGNC:8672">
    <property type="gene designation" value="PCDHA6"/>
</dbReference>
<dbReference type="HPA" id="ENSG00000081842">
    <property type="expression patterns" value="Tissue enhanced (brain)"/>
</dbReference>
<dbReference type="MalaCards" id="PCDHA6"/>
<dbReference type="MIM" id="604966">
    <property type="type" value="gene"/>
</dbReference>
<dbReference type="MIM" id="606312">
    <property type="type" value="gene"/>
</dbReference>
<dbReference type="neXtProt" id="NX_Q9UN73"/>
<dbReference type="OpenTargets" id="ENSG00000081842"/>
<dbReference type="PharmGKB" id="PA33018"/>
<dbReference type="VEuPathDB" id="HostDB:ENSG00000081842"/>
<dbReference type="eggNOG" id="KOG3594">
    <property type="taxonomic scope" value="Eukaryota"/>
</dbReference>
<dbReference type="GeneTree" id="ENSGT00940000163903"/>
<dbReference type="HOGENOM" id="CLU_006480_0_1_1"/>
<dbReference type="InParanoid" id="Q9UN73"/>
<dbReference type="OMA" id="YEDTNFY"/>
<dbReference type="OrthoDB" id="6252479at2759"/>
<dbReference type="PAN-GO" id="Q9UN73">
    <property type="GO annotations" value="2 GO annotations based on evolutionary models"/>
</dbReference>
<dbReference type="PhylomeDB" id="Q9UN73"/>
<dbReference type="TreeFam" id="TF332299"/>
<dbReference type="PathwayCommons" id="Q9UN73"/>
<dbReference type="SignaLink" id="Q9UN73"/>
<dbReference type="SIGNOR" id="Q9UN73"/>
<dbReference type="BioGRID-ORCS" id="56142">
    <property type="hits" value="11 hits in 1098 CRISPR screens"/>
</dbReference>
<dbReference type="GeneWiki" id="PCDHA6"/>
<dbReference type="GenomeRNAi" id="56142"/>
<dbReference type="Pharos" id="Q9UN73">
    <property type="development level" value="Tdark"/>
</dbReference>
<dbReference type="PRO" id="PR:Q9UN73"/>
<dbReference type="Proteomes" id="UP000005640">
    <property type="component" value="Chromosome 5"/>
</dbReference>
<dbReference type="RNAct" id="Q9UN73">
    <property type="molecule type" value="protein"/>
</dbReference>
<dbReference type="Bgee" id="ENSG00000081842">
    <property type="expression patterns" value="Expressed in male germ line stem cell (sensu Vertebrata) in testis and 71 other cell types or tissues"/>
</dbReference>
<dbReference type="GO" id="GO:0005576">
    <property type="term" value="C:extracellular region"/>
    <property type="evidence" value="ECO:0007669"/>
    <property type="project" value="UniProtKB-SubCell"/>
</dbReference>
<dbReference type="GO" id="GO:0005886">
    <property type="term" value="C:plasma membrane"/>
    <property type="evidence" value="ECO:0000318"/>
    <property type="project" value="GO_Central"/>
</dbReference>
<dbReference type="GO" id="GO:0005509">
    <property type="term" value="F:calcium ion binding"/>
    <property type="evidence" value="ECO:0007669"/>
    <property type="project" value="InterPro"/>
</dbReference>
<dbReference type="GO" id="GO:0007155">
    <property type="term" value="P:cell adhesion"/>
    <property type="evidence" value="ECO:0000318"/>
    <property type="project" value="GO_Central"/>
</dbReference>
<dbReference type="GO" id="GO:0007156">
    <property type="term" value="P:homophilic cell adhesion via plasma membrane adhesion molecules"/>
    <property type="evidence" value="ECO:0007669"/>
    <property type="project" value="InterPro"/>
</dbReference>
<dbReference type="GO" id="GO:0007399">
    <property type="term" value="P:nervous system development"/>
    <property type="evidence" value="ECO:0000304"/>
    <property type="project" value="ProtInc"/>
</dbReference>
<dbReference type="CDD" id="cd11304">
    <property type="entry name" value="Cadherin_repeat"/>
    <property type="match status" value="6"/>
</dbReference>
<dbReference type="FunFam" id="2.60.40.60:FF:000001">
    <property type="entry name" value="Protocadherin alpha 2"/>
    <property type="match status" value="1"/>
</dbReference>
<dbReference type="FunFam" id="2.60.40.60:FF:000002">
    <property type="entry name" value="Protocadherin alpha 2"/>
    <property type="match status" value="1"/>
</dbReference>
<dbReference type="FunFam" id="2.60.40.60:FF:000003">
    <property type="entry name" value="Protocadherin alpha 2"/>
    <property type="match status" value="1"/>
</dbReference>
<dbReference type="FunFam" id="2.60.40.60:FF:000006">
    <property type="entry name" value="Protocadherin alpha 2"/>
    <property type="match status" value="1"/>
</dbReference>
<dbReference type="FunFam" id="2.60.40.60:FF:000007">
    <property type="entry name" value="Protocadherin alpha 2"/>
    <property type="match status" value="1"/>
</dbReference>
<dbReference type="FunFam" id="2.60.40.60:FF:000076">
    <property type="entry name" value="Protocadherin alpha 2"/>
    <property type="match status" value="1"/>
</dbReference>
<dbReference type="Gene3D" id="2.60.40.60">
    <property type="entry name" value="Cadherins"/>
    <property type="match status" value="6"/>
</dbReference>
<dbReference type="InterPro" id="IPR002126">
    <property type="entry name" value="Cadherin-like_dom"/>
</dbReference>
<dbReference type="InterPro" id="IPR015919">
    <property type="entry name" value="Cadherin-like_sf"/>
</dbReference>
<dbReference type="InterPro" id="IPR031904">
    <property type="entry name" value="Cadherin_CBD"/>
</dbReference>
<dbReference type="InterPro" id="IPR020894">
    <property type="entry name" value="Cadherin_CS"/>
</dbReference>
<dbReference type="InterPro" id="IPR013164">
    <property type="entry name" value="Cadherin_N"/>
</dbReference>
<dbReference type="InterPro" id="IPR050174">
    <property type="entry name" value="Protocadherin/Cadherin-CA"/>
</dbReference>
<dbReference type="PANTHER" id="PTHR24028">
    <property type="entry name" value="CADHERIN-87A"/>
    <property type="match status" value="1"/>
</dbReference>
<dbReference type="PANTHER" id="PTHR24028:SF305">
    <property type="entry name" value="PROTOCADHERIN ALPHA-6-RELATED"/>
    <property type="match status" value="1"/>
</dbReference>
<dbReference type="Pfam" id="PF00028">
    <property type="entry name" value="Cadherin"/>
    <property type="match status" value="5"/>
</dbReference>
<dbReference type="Pfam" id="PF08266">
    <property type="entry name" value="Cadherin_2"/>
    <property type="match status" value="1"/>
</dbReference>
<dbReference type="Pfam" id="PF15974">
    <property type="entry name" value="Cadherin_tail"/>
    <property type="match status" value="1"/>
</dbReference>
<dbReference type="PRINTS" id="PR00205">
    <property type="entry name" value="CADHERIN"/>
</dbReference>
<dbReference type="SMART" id="SM00112">
    <property type="entry name" value="CA"/>
    <property type="match status" value="6"/>
</dbReference>
<dbReference type="SUPFAM" id="SSF49313">
    <property type="entry name" value="Cadherin-like"/>
    <property type="match status" value="6"/>
</dbReference>
<dbReference type="PROSITE" id="PS00232">
    <property type="entry name" value="CADHERIN_1"/>
    <property type="match status" value="5"/>
</dbReference>
<dbReference type="PROSITE" id="PS50268">
    <property type="entry name" value="CADHERIN_2"/>
    <property type="match status" value="6"/>
</dbReference>
<proteinExistence type="evidence at protein level"/>
<gene>
    <name type="primary">PCDHA6</name>
    <name type="synonym">CNRS2</name>
</gene>
<accession>Q9UN73</accession>
<accession>O75283</accession>
<accession>Q9NRT8</accession>
<organism>
    <name type="scientific">Homo sapiens</name>
    <name type="common">Human</name>
    <dbReference type="NCBI Taxonomy" id="9606"/>
    <lineage>
        <taxon>Eukaryota</taxon>
        <taxon>Metazoa</taxon>
        <taxon>Chordata</taxon>
        <taxon>Craniata</taxon>
        <taxon>Vertebrata</taxon>
        <taxon>Euteleostomi</taxon>
        <taxon>Mammalia</taxon>
        <taxon>Eutheria</taxon>
        <taxon>Euarchontoglires</taxon>
        <taxon>Primates</taxon>
        <taxon>Haplorrhini</taxon>
        <taxon>Catarrhini</taxon>
        <taxon>Hominidae</taxon>
        <taxon>Homo</taxon>
    </lineage>
</organism>
<evidence type="ECO:0000250" key="1"/>
<evidence type="ECO:0000255" key="2"/>
<evidence type="ECO:0000255" key="3">
    <source>
        <dbReference type="PROSITE-ProRule" id="PRU00043"/>
    </source>
</evidence>
<evidence type="ECO:0000256" key="4">
    <source>
        <dbReference type="SAM" id="MobiDB-lite"/>
    </source>
</evidence>
<evidence type="ECO:0000303" key="5">
    <source>
    </source>
</evidence>
<evidence type="ECO:0000303" key="6">
    <source ref="2"/>
</evidence>
<evidence type="ECO:0000305" key="7"/>
<reference key="1">
    <citation type="journal article" date="1999" name="Cell">
        <title>A striking organization of a large family of human neural cadherin-like cell adhesion genes.</title>
        <authorList>
            <person name="Wu Q."/>
            <person name="Maniatis T."/>
        </authorList>
    </citation>
    <scope>NUCLEOTIDE SEQUENCE [MRNA] (ISOFORMS 1 AND 3)</scope>
    <source>
        <tissue>Brain</tissue>
    </source>
</reference>
<reference key="2">
    <citation type="submission" date="1999-07" db="EMBL/GenBank/DDBJ databases">
        <title>Alternative splicing within the human CNR family of protocadherins (PCDH-alpha) produces transcripts encoding secreted proteins.</title>
        <authorList>
            <person name="Kools P.F.J."/>
            <person name="van Roy F."/>
        </authorList>
    </citation>
    <scope>NUCLEOTIDE SEQUENCE [MRNA] (ISOFORM 2)</scope>
    <source>
        <tissue>Brain</tissue>
    </source>
</reference>
<reference key="3">
    <citation type="journal article" date="2004" name="Nature">
        <title>The DNA sequence and comparative analysis of human chromosome 5.</title>
        <authorList>
            <person name="Schmutz J."/>
            <person name="Martin J."/>
            <person name="Terry A."/>
            <person name="Couronne O."/>
            <person name="Grimwood J."/>
            <person name="Lowry S."/>
            <person name="Gordon L.A."/>
            <person name="Scott D."/>
            <person name="Xie G."/>
            <person name="Huang W."/>
            <person name="Hellsten U."/>
            <person name="Tran-Gyamfi M."/>
            <person name="She X."/>
            <person name="Prabhakar S."/>
            <person name="Aerts A."/>
            <person name="Altherr M."/>
            <person name="Bajorek E."/>
            <person name="Black S."/>
            <person name="Branscomb E."/>
            <person name="Caoile C."/>
            <person name="Challacombe J.F."/>
            <person name="Chan Y.M."/>
            <person name="Denys M."/>
            <person name="Detter J.C."/>
            <person name="Escobar J."/>
            <person name="Flowers D."/>
            <person name="Fotopulos D."/>
            <person name="Glavina T."/>
            <person name="Gomez M."/>
            <person name="Gonzales E."/>
            <person name="Goodstein D."/>
            <person name="Grigoriev I."/>
            <person name="Groza M."/>
            <person name="Hammon N."/>
            <person name="Hawkins T."/>
            <person name="Haydu L."/>
            <person name="Israni S."/>
            <person name="Jett J."/>
            <person name="Kadner K."/>
            <person name="Kimball H."/>
            <person name="Kobayashi A."/>
            <person name="Lopez F."/>
            <person name="Lou Y."/>
            <person name="Martinez D."/>
            <person name="Medina C."/>
            <person name="Morgan J."/>
            <person name="Nandkeshwar R."/>
            <person name="Noonan J.P."/>
            <person name="Pitluck S."/>
            <person name="Pollard M."/>
            <person name="Predki P."/>
            <person name="Priest J."/>
            <person name="Ramirez L."/>
            <person name="Retterer J."/>
            <person name="Rodriguez A."/>
            <person name="Rogers S."/>
            <person name="Salamov A."/>
            <person name="Salazar A."/>
            <person name="Thayer N."/>
            <person name="Tice H."/>
            <person name="Tsai M."/>
            <person name="Ustaszewska A."/>
            <person name="Vo N."/>
            <person name="Wheeler J."/>
            <person name="Wu K."/>
            <person name="Yang J."/>
            <person name="Dickson M."/>
            <person name="Cheng J.-F."/>
            <person name="Eichler E.E."/>
            <person name="Olsen A."/>
            <person name="Pennacchio L.A."/>
            <person name="Rokhsar D.S."/>
            <person name="Richardson P."/>
            <person name="Lucas S.M."/>
            <person name="Myers R.M."/>
            <person name="Rubin E.M."/>
        </authorList>
    </citation>
    <scope>NUCLEOTIDE SEQUENCE [LARGE SCALE GENOMIC DNA]</scope>
</reference>
<reference key="4">
    <citation type="journal article" date="2004" name="Genome Res.">
        <title>The status, quality, and expansion of the NIH full-length cDNA project: the Mammalian Gene Collection (MGC).</title>
        <authorList>
            <consortium name="The MGC Project Team"/>
        </authorList>
    </citation>
    <scope>NUCLEOTIDE SEQUENCE [LARGE SCALE MRNA] (ISOFORM 1)</scope>
    <source>
        <tissue>Brain</tissue>
    </source>
</reference>
<protein>
    <recommendedName>
        <fullName>Protocadherin alpha-6</fullName>
        <shortName>PCDH-alpha-6</shortName>
    </recommendedName>
</protein>
<sequence>MVFTPEDRLGKQCLLLPLLLLAAWKVGSGQLHYSVPEEAKHGTFVGRIAQDLGLELAELVPRLFRMASKDREDLLEVNLQNGILFVNSRIDREELCGRSAECSIHLEVIVDRPLQVFHVDVEVRDINDNPPLFPVEEQRVLIYESRLPDSVFPLEGASDADVGSNSILTYKLSSSEYFGLDVKINSDDNKQIGLLLKKSLDREEAPAHNLFLTATDGGKPELTGTVQLLVTVLDVNDNAPTFEQSEYEVRIFENADNGTTVIRLNASDRDEGANGAISYSFNSLVAAMVIDHFSIDRNTGEIVIRGNLDFEQENLYKILIDATDKGHPPMAGHCTVLVRILDKNDNVPEIALTSLSLPVREDAQFGTVIALISVNDLDSGANGQVNCSLTPHVPFKLVSTFKNYYSLVLDSALDRESVSAYELVVTARDGGSPSLWATASLSVEVADMNDNAPAFAQPEYTVFVKENNPPGCHIFTVSARDADAQENALVSYSLVERRVGERALSSYISVHAESGKVYALQPLDHEELELLQFQVSARDAGVPPLGSNVTLQVFVLDENDNAPALLAPRVGGTGGAVSELVPRSLGAGQVVAKVRAVDADSGYNAWLSYELQPPASSARFPFRVGLYTGEISTTRVLDEADSPRHRLLVLVKDHGEPALTATATVLVSLVESGQAPKASSRASVGAAGPEAALVDVNVYLIIAICAVSSLLVLTLLLYTALRCSAPPTEGACTADKPTLVCSSAVGSWSYSQQRRQRVCSGEGPPKMDLMAFSPSLSPCPIMMGKAENQDLNEDHDAKPRQPNPDWRYSASLRAGMHSSVHLEEAGILRAGPGGPDQQWPTVSSATPEPEAGEVSPPVGAGVNSNSWTFKYGPGNPKQSGPGELPDKFIIPGSPAIISIRQEPTNSQIDKSDFITFGKKEETKKKKKKKKGNKTQEKKEKGNSTTDNSDQ</sequence>
<comment type="function">
    <text>Potential calcium-dependent cell-adhesion protein. May be involved in the establishment and maintenance of specific neuronal connections in the brain.</text>
</comment>
<comment type="subcellular location">
    <molecule>Isoform 1</molecule>
    <subcellularLocation>
        <location evidence="1">Cell membrane</location>
        <topology evidence="1">Single-pass type I membrane protein</topology>
    </subcellularLocation>
</comment>
<comment type="subcellular location">
    <molecule>Isoform 2</molecule>
    <subcellularLocation>
        <location evidence="7">Secreted</location>
    </subcellularLocation>
</comment>
<comment type="alternative products">
    <event type="alternative splicing"/>
    <isoform>
        <id>Q9UN73-1</id>
        <name>1</name>
        <sequence type="displayed"/>
    </isoform>
    <isoform>
        <id>Q9UN73-2</id>
        <name>2</name>
        <sequence type="described" ref="VSP_000681"/>
    </isoform>
    <isoform>
        <id>Q9UN73-3</id>
        <name>3</name>
        <sequence type="described" ref="VSP_000682 VSP_000683"/>
    </isoform>
    <text>Additional isoforms seem to exist.</text>
</comment>
<comment type="sequence caution" evidence="7">
    <conflict type="erroneous initiation">
        <sequence resource="EMBL-CDS" id="AAF89691"/>
    </conflict>
</comment>
<keyword id="KW-0025">Alternative splicing</keyword>
<keyword id="KW-0106">Calcium</keyword>
<keyword id="KW-0130">Cell adhesion</keyword>
<keyword id="KW-1003">Cell membrane</keyword>
<keyword id="KW-0325">Glycoprotein</keyword>
<keyword id="KW-0472">Membrane</keyword>
<keyword id="KW-1267">Proteomics identification</keyword>
<keyword id="KW-1185">Reference proteome</keyword>
<keyword id="KW-0677">Repeat</keyword>
<keyword id="KW-0964">Secreted</keyword>
<keyword id="KW-0732">Signal</keyword>
<keyword id="KW-0812">Transmembrane</keyword>
<keyword id="KW-1133">Transmembrane helix</keyword>